<proteinExistence type="evidence at protein level"/>
<dbReference type="EMBL" id="AK004818">
    <property type="protein sequence ID" value="BAB23589.1"/>
    <property type="molecule type" value="mRNA"/>
</dbReference>
<dbReference type="EMBL" id="AL627205">
    <property type="status" value="NOT_ANNOTATED_CDS"/>
    <property type="molecule type" value="Genomic_DNA"/>
</dbReference>
<dbReference type="EMBL" id="CH466558">
    <property type="protein sequence ID" value="EDL34612.1"/>
    <property type="molecule type" value="Genomic_DNA"/>
</dbReference>
<dbReference type="EMBL" id="BC005766">
    <property type="protein sequence ID" value="AAH05766.1"/>
    <property type="molecule type" value="mRNA"/>
</dbReference>
<dbReference type="EMBL" id="AK172947">
    <property type="protein sequence ID" value="BAD32225.1"/>
    <property type="molecule type" value="mRNA"/>
</dbReference>
<dbReference type="CCDS" id="CCDS25683.1">
    <molecule id="A8Y5H7-3"/>
</dbReference>
<dbReference type="CCDS" id="CCDS48988.1">
    <molecule id="A8Y5H7-2"/>
</dbReference>
<dbReference type="CCDS" id="CCDS48989.1">
    <molecule id="A8Y5H7-1"/>
</dbReference>
<dbReference type="RefSeq" id="NP_001159978.1">
    <molecule id="A8Y5H7-1"/>
    <property type="nucleotide sequence ID" value="NM_001166506.2"/>
</dbReference>
<dbReference type="RefSeq" id="NP_001159979.1">
    <molecule id="A8Y5H7-2"/>
    <property type="nucleotide sequence ID" value="NM_001166507.2"/>
</dbReference>
<dbReference type="RefSeq" id="NP_083053.2">
    <molecule id="A8Y5H7-3"/>
    <property type="nucleotide sequence ID" value="NM_028777.4"/>
</dbReference>
<dbReference type="SMR" id="A8Y5H7"/>
<dbReference type="FunCoup" id="A8Y5H7">
    <property type="interactions" value="3867"/>
</dbReference>
<dbReference type="STRING" id="10090.ENSMUSP00000021177"/>
<dbReference type="iPTMnet" id="A8Y5H7"/>
<dbReference type="PhosphoSitePlus" id="A8Y5H7"/>
<dbReference type="SwissPalm" id="A8Y5H7"/>
<dbReference type="PaxDb" id="10090-ENSMUSP00000021177"/>
<dbReference type="ProteomicsDB" id="260966">
    <molecule id="A8Y5H7-1"/>
</dbReference>
<dbReference type="ProteomicsDB" id="260967">
    <molecule id="A8Y5H7-2"/>
</dbReference>
<dbReference type="ProteomicsDB" id="260968">
    <molecule id="A8Y5H7-3"/>
</dbReference>
<dbReference type="Pumba" id="A8Y5H7"/>
<dbReference type="Antibodypedia" id="32469">
    <property type="antibodies" value="67 antibodies from 14 providers"/>
</dbReference>
<dbReference type="DNASU" id="74136"/>
<dbReference type="Ensembl" id="ENSMUST00000021177.15">
    <molecule id="A8Y5H7-3"/>
    <property type="protein sequence ID" value="ENSMUSP00000021177.9"/>
    <property type="gene ID" value="ENSMUSG00000020823.17"/>
</dbReference>
<dbReference type="Ensembl" id="ENSMUST00000090433.6">
    <molecule id="A8Y5H7-1"/>
    <property type="protein sequence ID" value="ENSMUSP00000087916.6"/>
    <property type="gene ID" value="ENSMUSG00000020823.17"/>
</dbReference>
<dbReference type="Ensembl" id="ENSMUST00000103026.10">
    <molecule id="A8Y5H7-2"/>
    <property type="protein sequence ID" value="ENSMUSP00000099315.4"/>
    <property type="gene ID" value="ENSMUSG00000020823.17"/>
</dbReference>
<dbReference type="GeneID" id="74136"/>
<dbReference type="KEGG" id="mmu:74136"/>
<dbReference type="UCSC" id="uc007mna.2">
    <molecule id="A8Y5H7-1"/>
    <property type="organism name" value="mouse"/>
</dbReference>
<dbReference type="UCSC" id="uc007mnb.2">
    <property type="organism name" value="mouse"/>
</dbReference>
<dbReference type="UCSC" id="uc011yih.1">
    <property type="organism name" value="mouse"/>
</dbReference>
<dbReference type="AGR" id="MGI:1921386"/>
<dbReference type="CTD" id="6397"/>
<dbReference type="MGI" id="MGI:1921386">
    <property type="gene designation" value="Sec14l1"/>
</dbReference>
<dbReference type="VEuPathDB" id="HostDB:ENSMUSG00000020823"/>
<dbReference type="eggNOG" id="KOG1471">
    <property type="taxonomic scope" value="Eukaryota"/>
</dbReference>
<dbReference type="GeneTree" id="ENSGT00940000155386"/>
<dbReference type="HOGENOM" id="CLU_023840_0_0_1"/>
<dbReference type="InParanoid" id="A8Y5H7"/>
<dbReference type="OMA" id="AEWTCFD"/>
<dbReference type="OrthoDB" id="11756at9989"/>
<dbReference type="TreeFam" id="TF313988"/>
<dbReference type="BioGRID-ORCS" id="74136">
    <property type="hits" value="5 hits in 75 CRISPR screens"/>
</dbReference>
<dbReference type="ChiTaRS" id="Sec14l1">
    <property type="organism name" value="mouse"/>
</dbReference>
<dbReference type="PRO" id="PR:A8Y5H7"/>
<dbReference type="Proteomes" id="UP000000589">
    <property type="component" value="Chromosome 11"/>
</dbReference>
<dbReference type="RNAct" id="A8Y5H7">
    <property type="molecule type" value="protein"/>
</dbReference>
<dbReference type="Bgee" id="ENSMUSG00000020823">
    <property type="expression patterns" value="Expressed in submandibular gland and 258 other cell types or tissues"/>
</dbReference>
<dbReference type="GO" id="GO:0005737">
    <property type="term" value="C:cytoplasm"/>
    <property type="evidence" value="ECO:0000250"/>
    <property type="project" value="UniProtKB"/>
</dbReference>
<dbReference type="GO" id="GO:0005829">
    <property type="term" value="C:cytosol"/>
    <property type="evidence" value="ECO:0007669"/>
    <property type="project" value="Ensembl"/>
</dbReference>
<dbReference type="GO" id="GO:0005794">
    <property type="term" value="C:Golgi apparatus"/>
    <property type="evidence" value="ECO:0007669"/>
    <property type="project" value="UniProtKB-SubCell"/>
</dbReference>
<dbReference type="GO" id="GO:0005654">
    <property type="term" value="C:nucleoplasm"/>
    <property type="evidence" value="ECO:0007669"/>
    <property type="project" value="Ensembl"/>
</dbReference>
<dbReference type="GO" id="GO:0140311">
    <property type="term" value="F:protein sequestering activity"/>
    <property type="evidence" value="ECO:0007669"/>
    <property type="project" value="Ensembl"/>
</dbReference>
<dbReference type="GO" id="GO:0039552">
    <property type="term" value="F:RIG-I binding"/>
    <property type="evidence" value="ECO:0000250"/>
    <property type="project" value="UniProtKB"/>
</dbReference>
<dbReference type="GO" id="GO:0015871">
    <property type="term" value="P:choline transport"/>
    <property type="evidence" value="ECO:0000250"/>
    <property type="project" value="UniProtKB"/>
</dbReference>
<dbReference type="GO" id="GO:0045087">
    <property type="term" value="P:innate immune response"/>
    <property type="evidence" value="ECO:0007669"/>
    <property type="project" value="UniProtKB-KW"/>
</dbReference>
<dbReference type="GO" id="GO:0039536">
    <property type="term" value="P:negative regulation of RIG-I signaling pathway"/>
    <property type="evidence" value="ECO:0000250"/>
    <property type="project" value="UniProtKB"/>
</dbReference>
<dbReference type="CDD" id="cd00170">
    <property type="entry name" value="SEC14"/>
    <property type="match status" value="1"/>
</dbReference>
<dbReference type="FunFam" id="2.60.120.680:FF:000003">
    <property type="entry name" value="SEC14-like lipid binding 1"/>
    <property type="match status" value="1"/>
</dbReference>
<dbReference type="FunFam" id="3.40.525.10:FF:000006">
    <property type="entry name" value="SEC14-like lipid binding 1"/>
    <property type="match status" value="1"/>
</dbReference>
<dbReference type="Gene3D" id="3.40.525.10">
    <property type="entry name" value="CRAL-TRIO lipid binding domain"/>
    <property type="match status" value="1"/>
</dbReference>
<dbReference type="Gene3D" id="2.60.120.680">
    <property type="entry name" value="GOLD domain"/>
    <property type="match status" value="1"/>
</dbReference>
<dbReference type="InterPro" id="IPR001251">
    <property type="entry name" value="CRAL-TRIO_dom"/>
</dbReference>
<dbReference type="InterPro" id="IPR036865">
    <property type="entry name" value="CRAL-TRIO_dom_sf"/>
</dbReference>
<dbReference type="InterPro" id="IPR011074">
    <property type="entry name" value="CRAL/TRIO_N_dom"/>
</dbReference>
<dbReference type="InterPro" id="IPR036273">
    <property type="entry name" value="CRAL/TRIO_N_dom_sf"/>
</dbReference>
<dbReference type="InterPro" id="IPR009038">
    <property type="entry name" value="GOLD_dom"/>
</dbReference>
<dbReference type="InterPro" id="IPR036598">
    <property type="entry name" value="GOLD_dom_sf"/>
</dbReference>
<dbReference type="InterPro" id="IPR006797">
    <property type="entry name" value="PRELI/MSF1_dom"/>
</dbReference>
<dbReference type="InterPro" id="IPR051064">
    <property type="entry name" value="SEC14/CRAL-TRIO_domain"/>
</dbReference>
<dbReference type="PANTHER" id="PTHR23324">
    <property type="entry name" value="SEC14 RELATED PROTEIN"/>
    <property type="match status" value="1"/>
</dbReference>
<dbReference type="PANTHER" id="PTHR23324:SF51">
    <property type="entry name" value="SEC14-LIKE PROTEIN 1"/>
    <property type="match status" value="1"/>
</dbReference>
<dbReference type="Pfam" id="PF00650">
    <property type="entry name" value="CRAL_TRIO"/>
    <property type="match status" value="1"/>
</dbReference>
<dbReference type="Pfam" id="PF03765">
    <property type="entry name" value="CRAL_TRIO_N"/>
    <property type="match status" value="1"/>
</dbReference>
<dbReference type="Pfam" id="PF04707">
    <property type="entry name" value="PRELI"/>
    <property type="match status" value="1"/>
</dbReference>
<dbReference type="SMART" id="SM01100">
    <property type="entry name" value="CRAL_TRIO_N"/>
    <property type="match status" value="1"/>
</dbReference>
<dbReference type="SMART" id="SM00516">
    <property type="entry name" value="SEC14"/>
    <property type="match status" value="1"/>
</dbReference>
<dbReference type="SUPFAM" id="SSF52087">
    <property type="entry name" value="CRAL/TRIO domain"/>
    <property type="match status" value="1"/>
</dbReference>
<dbReference type="SUPFAM" id="SSF46938">
    <property type="entry name" value="CRAL/TRIO N-terminal domain"/>
    <property type="match status" value="1"/>
</dbReference>
<dbReference type="SUPFAM" id="SSF101576">
    <property type="entry name" value="Supernatant protein factor (SPF), C-terminal domain"/>
    <property type="match status" value="1"/>
</dbReference>
<dbReference type="PROSITE" id="PS50191">
    <property type="entry name" value="CRAL_TRIO"/>
    <property type="match status" value="1"/>
</dbReference>
<dbReference type="PROSITE" id="PS50866">
    <property type="entry name" value="GOLD"/>
    <property type="match status" value="1"/>
</dbReference>
<dbReference type="PROSITE" id="PS50904">
    <property type="entry name" value="PRELI_MSF1"/>
    <property type="match status" value="1"/>
</dbReference>
<gene>
    <name evidence="7" type="primary">Sec14l1</name>
    <name evidence="6" type="synonym">Kiaa4251</name>
</gene>
<organism>
    <name type="scientific">Mus musculus</name>
    <name type="common">Mouse</name>
    <dbReference type="NCBI Taxonomy" id="10090"/>
    <lineage>
        <taxon>Eukaryota</taxon>
        <taxon>Metazoa</taxon>
        <taxon>Chordata</taxon>
        <taxon>Craniata</taxon>
        <taxon>Vertebrata</taxon>
        <taxon>Euteleostomi</taxon>
        <taxon>Mammalia</taxon>
        <taxon>Eutheria</taxon>
        <taxon>Euarchontoglires</taxon>
        <taxon>Glires</taxon>
        <taxon>Rodentia</taxon>
        <taxon>Myomorpha</taxon>
        <taxon>Muroidea</taxon>
        <taxon>Muridae</taxon>
        <taxon>Murinae</taxon>
        <taxon>Mus</taxon>
        <taxon>Mus</taxon>
    </lineage>
</organism>
<keyword id="KW-0025">Alternative splicing</keyword>
<keyword id="KW-0963">Cytoplasm</keyword>
<keyword id="KW-0333">Golgi apparatus</keyword>
<keyword id="KW-0391">Immunity</keyword>
<keyword id="KW-0399">Innate immunity</keyword>
<keyword id="KW-0597">Phosphoprotein</keyword>
<keyword id="KW-1185">Reference proteome</keyword>
<keyword id="KW-0734">Signal transduction inhibitor</keyword>
<evidence type="ECO:0000250" key="1">
    <source>
        <dbReference type="UniProtKB" id="Q92503"/>
    </source>
</evidence>
<evidence type="ECO:0000255" key="2">
    <source>
        <dbReference type="PROSITE-ProRule" id="PRU00056"/>
    </source>
</evidence>
<evidence type="ECO:0000255" key="3">
    <source>
        <dbReference type="PROSITE-ProRule" id="PRU00096"/>
    </source>
</evidence>
<evidence type="ECO:0000255" key="4">
    <source>
        <dbReference type="PROSITE-ProRule" id="PRU00158"/>
    </source>
</evidence>
<evidence type="ECO:0000305" key="5"/>
<evidence type="ECO:0000312" key="6">
    <source>
        <dbReference type="EMBL" id="BAD32225.1"/>
    </source>
</evidence>
<evidence type="ECO:0000312" key="7">
    <source>
        <dbReference type="MGI" id="MGI:1921386"/>
    </source>
</evidence>
<name>S14L1_MOUSE</name>
<sequence length="715" mass="81216">MVQKYQSPVRVYKHPFELIMAAYERRFPTCPLIPMFVDSDTVSEFKSEDGALHVIERRCKLDIDAPRLLKKIAGVDYVYFVQKNSLNSRDRTLHIEAHNETFSNRVIIHEHCCYTVHPENEDWTCFEQSASLDIKSFFGFESTVEKIAMKHYTSNIKKGKEIIEYYLRQLEEEGITFVPRWTPPPVGPSETCSSSKNQVTSAAVLVPDAAAVMEGLSGENLSSPGTASEPVVGTPDDKLDADYIKRYLGDLTPLQESCLIRLRQWLQETHKGKIPKDEHILRFLRARDFNIDKAREIMCQSLTWRKQHQVDYILDTWTPPQVLLDYYAGGWHHHDKDGRPLYVLRLGQMDTKGLVRALGEEALLRYVLSINEEGLRRCEENTKVFGRPISSWTCLVDLEGLNMRHLWRPGVKALLRIIEVVEANYPETLGRLLILRAPRVFPVLWTLVSPFIDDNTRRKFLIYAGNDYQGPGGLLDYIDKEIIPDFLSGECMCDVPEGGLVPKSLYRTAEELENEDLKLWTETIYQSASVFKGAPHEILIQIVDASSVITWDFDVCKGDIVFNIYHSKRSPQPPKKDSLGAHSITSPGGNNVQLIDKVWQLGRDYSMVESPLICKEGESVQGSHVTRWPGFYILQWKFHTMPACAATNLPRVDDVLASLQVSSHKCKVMYYTEVIGSEDFRGSMTSLESSHSGFSQLSAATTSSSQSQSSSMISR</sequence>
<accession>A8Y5H7</accession>
<accession>A2A9B9</accession>
<accession>Q6A071</accession>
<accession>Q99J07</accession>
<accession>Q9DBQ0</accession>
<feature type="chain" id="PRO_0000435528" description="SEC14-like protein 1">
    <location>
        <begin position="1"/>
        <end position="715"/>
    </location>
</feature>
<feature type="domain" description="PRELI/MSF1" evidence="4">
    <location>
        <begin position="3"/>
        <end position="175"/>
    </location>
</feature>
<feature type="domain" description="CRAL-TRIO" evidence="2">
    <location>
        <begin position="319"/>
        <end position="495"/>
    </location>
</feature>
<feature type="domain" description="GOLD" evidence="3">
    <location>
        <begin position="521"/>
        <end position="674"/>
    </location>
</feature>
<feature type="region of interest" description="Required for interaction and inhibitory function toward RIGI" evidence="1">
    <location>
        <begin position="1"/>
        <end position="510"/>
    </location>
</feature>
<feature type="modified residue" description="Phosphothreonine" evidence="1">
    <location>
        <position position="234"/>
    </location>
</feature>
<feature type="modified residue" description="Phosphoserine" evidence="1">
    <location>
        <position position="586"/>
    </location>
</feature>
<feature type="splice variant" id="VSP_058109" description="In isoform 2.">
    <original>R</original>
    <variation>SE</variation>
    <location>
        <position position="715"/>
    </location>
</feature>
<feature type="splice variant" id="VSP_058110" description="In isoform 3.">
    <original>R</original>
    <variation>RWRFC</variation>
    <location>
        <position position="715"/>
    </location>
</feature>
<feature type="sequence conflict" description="In Ref. 1; BAB23589." evidence="5" ref="1">
    <original>D</original>
    <variation>G</variation>
    <location>
        <position position="288"/>
    </location>
</feature>
<comment type="function">
    <text evidence="1">May play a role in innate immunity by inhibiting the antiviral RIG-I signaling pathway. In this pathway, functions as a negative regulator of RIGI, the cytoplasmic sensor of viral nucleic acids. Prevents the interaction of RIGI with MAVS/IPS1, an important step in signal propagation. May also regulate the SLC18A3 and SLC5A7 cholinergic transporters.</text>
</comment>
<comment type="subunit">
    <text evidence="1">Interacts with RIGI (via tandem CARD domain); the interaction is direct. Interacts (via GOLD domain) with SLC18A3; the interaction is direct. Interacts with SLC5A7 (via GOLD domain); the interaction is direct.</text>
</comment>
<comment type="subcellular location">
    <subcellularLocation>
        <location evidence="1">Cytoplasm</location>
    </subcellularLocation>
    <subcellularLocation>
        <location evidence="1">Golgi apparatus</location>
    </subcellularLocation>
</comment>
<comment type="alternative products">
    <event type="alternative splicing"/>
    <isoform>
        <id>A8Y5H7-1</id>
        <name>1</name>
        <sequence type="displayed"/>
    </isoform>
    <isoform>
        <id>A8Y5H7-2</id>
        <name>2</name>
        <sequence type="described" ref="VSP_058109"/>
    </isoform>
    <isoform>
        <id>A8Y5H7-3</id>
        <name>3</name>
        <sequence type="described" ref="VSP_058110"/>
    </isoform>
</comment>
<protein>
    <recommendedName>
        <fullName evidence="5">SEC14-like protein 1</fullName>
    </recommendedName>
</protein>
<reference key="1">
    <citation type="journal article" date="2005" name="Science">
        <title>The transcriptional landscape of the mammalian genome.</title>
        <authorList>
            <person name="Carninci P."/>
            <person name="Kasukawa T."/>
            <person name="Katayama S."/>
            <person name="Gough J."/>
            <person name="Frith M.C."/>
            <person name="Maeda N."/>
            <person name="Oyama R."/>
            <person name="Ravasi T."/>
            <person name="Lenhard B."/>
            <person name="Wells C."/>
            <person name="Kodzius R."/>
            <person name="Shimokawa K."/>
            <person name="Bajic V.B."/>
            <person name="Brenner S.E."/>
            <person name="Batalov S."/>
            <person name="Forrest A.R."/>
            <person name="Zavolan M."/>
            <person name="Davis M.J."/>
            <person name="Wilming L.G."/>
            <person name="Aidinis V."/>
            <person name="Allen J.E."/>
            <person name="Ambesi-Impiombato A."/>
            <person name="Apweiler R."/>
            <person name="Aturaliya R.N."/>
            <person name="Bailey T.L."/>
            <person name="Bansal M."/>
            <person name="Baxter L."/>
            <person name="Beisel K.W."/>
            <person name="Bersano T."/>
            <person name="Bono H."/>
            <person name="Chalk A.M."/>
            <person name="Chiu K.P."/>
            <person name="Choudhary V."/>
            <person name="Christoffels A."/>
            <person name="Clutterbuck D.R."/>
            <person name="Crowe M.L."/>
            <person name="Dalla E."/>
            <person name="Dalrymple B.P."/>
            <person name="de Bono B."/>
            <person name="Della Gatta G."/>
            <person name="di Bernardo D."/>
            <person name="Down T."/>
            <person name="Engstrom P."/>
            <person name="Fagiolini M."/>
            <person name="Faulkner G."/>
            <person name="Fletcher C.F."/>
            <person name="Fukushima T."/>
            <person name="Furuno M."/>
            <person name="Futaki S."/>
            <person name="Gariboldi M."/>
            <person name="Georgii-Hemming P."/>
            <person name="Gingeras T.R."/>
            <person name="Gojobori T."/>
            <person name="Green R.E."/>
            <person name="Gustincich S."/>
            <person name="Harbers M."/>
            <person name="Hayashi Y."/>
            <person name="Hensch T.K."/>
            <person name="Hirokawa N."/>
            <person name="Hill D."/>
            <person name="Huminiecki L."/>
            <person name="Iacono M."/>
            <person name="Ikeo K."/>
            <person name="Iwama A."/>
            <person name="Ishikawa T."/>
            <person name="Jakt M."/>
            <person name="Kanapin A."/>
            <person name="Katoh M."/>
            <person name="Kawasawa Y."/>
            <person name="Kelso J."/>
            <person name="Kitamura H."/>
            <person name="Kitano H."/>
            <person name="Kollias G."/>
            <person name="Krishnan S.P."/>
            <person name="Kruger A."/>
            <person name="Kummerfeld S.K."/>
            <person name="Kurochkin I.V."/>
            <person name="Lareau L.F."/>
            <person name="Lazarevic D."/>
            <person name="Lipovich L."/>
            <person name="Liu J."/>
            <person name="Liuni S."/>
            <person name="McWilliam S."/>
            <person name="Madan Babu M."/>
            <person name="Madera M."/>
            <person name="Marchionni L."/>
            <person name="Matsuda H."/>
            <person name="Matsuzawa S."/>
            <person name="Miki H."/>
            <person name="Mignone F."/>
            <person name="Miyake S."/>
            <person name="Morris K."/>
            <person name="Mottagui-Tabar S."/>
            <person name="Mulder N."/>
            <person name="Nakano N."/>
            <person name="Nakauchi H."/>
            <person name="Ng P."/>
            <person name="Nilsson R."/>
            <person name="Nishiguchi S."/>
            <person name="Nishikawa S."/>
            <person name="Nori F."/>
            <person name="Ohara O."/>
            <person name="Okazaki Y."/>
            <person name="Orlando V."/>
            <person name="Pang K.C."/>
            <person name="Pavan W.J."/>
            <person name="Pavesi G."/>
            <person name="Pesole G."/>
            <person name="Petrovsky N."/>
            <person name="Piazza S."/>
            <person name="Reed J."/>
            <person name="Reid J.F."/>
            <person name="Ring B.Z."/>
            <person name="Ringwald M."/>
            <person name="Rost B."/>
            <person name="Ruan Y."/>
            <person name="Salzberg S.L."/>
            <person name="Sandelin A."/>
            <person name="Schneider C."/>
            <person name="Schoenbach C."/>
            <person name="Sekiguchi K."/>
            <person name="Semple C.A."/>
            <person name="Seno S."/>
            <person name="Sessa L."/>
            <person name="Sheng Y."/>
            <person name="Shibata Y."/>
            <person name="Shimada H."/>
            <person name="Shimada K."/>
            <person name="Silva D."/>
            <person name="Sinclair B."/>
            <person name="Sperling S."/>
            <person name="Stupka E."/>
            <person name="Sugiura K."/>
            <person name="Sultana R."/>
            <person name="Takenaka Y."/>
            <person name="Taki K."/>
            <person name="Tammoja K."/>
            <person name="Tan S.L."/>
            <person name="Tang S."/>
            <person name="Taylor M.S."/>
            <person name="Tegner J."/>
            <person name="Teichmann S.A."/>
            <person name="Ueda H.R."/>
            <person name="van Nimwegen E."/>
            <person name="Verardo R."/>
            <person name="Wei C.L."/>
            <person name="Yagi K."/>
            <person name="Yamanishi H."/>
            <person name="Zabarovsky E."/>
            <person name="Zhu S."/>
            <person name="Zimmer A."/>
            <person name="Hide W."/>
            <person name="Bult C."/>
            <person name="Grimmond S.M."/>
            <person name="Teasdale R.D."/>
            <person name="Liu E.T."/>
            <person name="Brusic V."/>
            <person name="Quackenbush J."/>
            <person name="Wahlestedt C."/>
            <person name="Mattick J.S."/>
            <person name="Hume D.A."/>
            <person name="Kai C."/>
            <person name="Sasaki D."/>
            <person name="Tomaru Y."/>
            <person name="Fukuda S."/>
            <person name="Kanamori-Katayama M."/>
            <person name="Suzuki M."/>
            <person name="Aoki J."/>
            <person name="Arakawa T."/>
            <person name="Iida J."/>
            <person name="Imamura K."/>
            <person name="Itoh M."/>
            <person name="Kato T."/>
            <person name="Kawaji H."/>
            <person name="Kawagashira N."/>
            <person name="Kawashima T."/>
            <person name="Kojima M."/>
            <person name="Kondo S."/>
            <person name="Konno H."/>
            <person name="Nakano K."/>
            <person name="Ninomiya N."/>
            <person name="Nishio T."/>
            <person name="Okada M."/>
            <person name="Plessy C."/>
            <person name="Shibata K."/>
            <person name="Shiraki T."/>
            <person name="Suzuki S."/>
            <person name="Tagami M."/>
            <person name="Waki K."/>
            <person name="Watahiki A."/>
            <person name="Okamura-Oho Y."/>
            <person name="Suzuki H."/>
            <person name="Kawai J."/>
            <person name="Hayashizaki Y."/>
        </authorList>
    </citation>
    <scope>NUCLEOTIDE SEQUENCE [LARGE SCALE MRNA] (ISOFORM 3)</scope>
    <source>
        <strain>C57BL/6J</strain>
        <tissue>Lung</tissue>
    </source>
</reference>
<reference key="2">
    <citation type="journal article" date="2009" name="PLoS Biol.">
        <title>Lineage-specific biology revealed by a finished genome assembly of the mouse.</title>
        <authorList>
            <person name="Church D.M."/>
            <person name="Goodstadt L."/>
            <person name="Hillier L.W."/>
            <person name="Zody M.C."/>
            <person name="Goldstein S."/>
            <person name="She X."/>
            <person name="Bult C.J."/>
            <person name="Agarwala R."/>
            <person name="Cherry J.L."/>
            <person name="DiCuccio M."/>
            <person name="Hlavina W."/>
            <person name="Kapustin Y."/>
            <person name="Meric P."/>
            <person name="Maglott D."/>
            <person name="Birtle Z."/>
            <person name="Marques A.C."/>
            <person name="Graves T."/>
            <person name="Zhou S."/>
            <person name="Teague B."/>
            <person name="Potamousis K."/>
            <person name="Churas C."/>
            <person name="Place M."/>
            <person name="Herschleb J."/>
            <person name="Runnheim R."/>
            <person name="Forrest D."/>
            <person name="Amos-Landgraf J."/>
            <person name="Schwartz D.C."/>
            <person name="Cheng Z."/>
            <person name="Lindblad-Toh K."/>
            <person name="Eichler E.E."/>
            <person name="Ponting C.P."/>
        </authorList>
    </citation>
    <scope>NUCLEOTIDE SEQUENCE [LARGE SCALE GENOMIC DNA]</scope>
    <source>
        <strain>C57BL/6J</strain>
    </source>
</reference>
<reference key="3">
    <citation type="submission" date="2005-07" db="EMBL/GenBank/DDBJ databases">
        <authorList>
            <person name="Mural R.J."/>
            <person name="Adams M.D."/>
            <person name="Myers E.W."/>
            <person name="Smith H.O."/>
            <person name="Venter J.C."/>
        </authorList>
    </citation>
    <scope>NUCLEOTIDE SEQUENCE [LARGE SCALE GENOMIC DNA]</scope>
</reference>
<reference key="4">
    <citation type="journal article" date="2004" name="Genome Res.">
        <title>The status, quality, and expansion of the NIH full-length cDNA project: the Mammalian Gene Collection (MGC).</title>
        <authorList>
            <consortium name="The MGC Project Team"/>
        </authorList>
    </citation>
    <scope>NUCLEOTIDE SEQUENCE [LARGE SCALE MRNA] (ISOFORM 2)</scope>
    <source>
        <strain>129</strain>
        <tissue>Mammary tumor</tissue>
    </source>
</reference>
<reference key="5">
    <citation type="journal article" date="2004" name="DNA Res.">
        <title>Prediction of the coding sequences of mouse homologues of KIAA gene: IV. The complete nucleotide sequences of 500 mouse KIAA-homologous cDNAs identified by screening of terminal sequences of cDNA clones randomly sampled from size-fractionated libraries.</title>
        <authorList>
            <person name="Okazaki N."/>
            <person name="Kikuno R."/>
            <person name="Ohara R."/>
            <person name="Inamoto S."/>
            <person name="Koseki H."/>
            <person name="Hiraoka S."/>
            <person name="Saga Y."/>
            <person name="Seino S."/>
            <person name="Nishimura M."/>
            <person name="Kaisho T."/>
            <person name="Hoshino K."/>
            <person name="Kitamura H."/>
            <person name="Nagase T."/>
            <person name="Ohara O."/>
            <person name="Koga H."/>
        </authorList>
    </citation>
    <scope>NUCLEOTIDE SEQUENCE [LARGE SCALE MRNA] OF 86-715 (ISOFORM 1)</scope>
    <source>
        <tissue>Fetal brain</tissue>
    </source>
</reference>
<reference key="6">
    <citation type="journal article" date="2010" name="Cell">
        <title>A tissue-specific atlas of mouse protein phosphorylation and expression.</title>
        <authorList>
            <person name="Huttlin E.L."/>
            <person name="Jedrychowski M.P."/>
            <person name="Elias J.E."/>
            <person name="Goswami T."/>
            <person name="Rad R."/>
            <person name="Beausoleil S.A."/>
            <person name="Villen J."/>
            <person name="Haas W."/>
            <person name="Sowa M.E."/>
            <person name="Gygi S.P."/>
        </authorList>
    </citation>
    <scope>IDENTIFICATION BY MASS SPECTROMETRY [LARGE SCALE ANALYSIS]</scope>
    <source>
        <tissue>Brain</tissue>
        <tissue>Spleen</tissue>
    </source>
</reference>